<accession>O75077</accession>
<accession>A2RU59</accession>
<name>ADA23_HUMAN</name>
<sequence length="832" mass="91926">MKPPGSSSRQPPLAGCSLAGASCGPQRGPAGSVPASAPARTPPCRLLLVLLLLPPLAASSRPRAWGAAAPSAPHWNETAEKNLGVLADEDNTLQQNSSSNISYSNAMQKEITLPSRLIYYINQDSESPYHVLDTKARHQQKHNKAVHLAQASFQIEAFGSKFILDLILNNGLLSSDYVEIHYENGKPQYSKGGEHCYYHGSIRGVKDSKVALSTCNGLHGMFEDDTFVYMIEPLELVHDEKSTGRPHIIQKTLAGQYSKQMKNLTMERGDQWPFLSELQWLKRRKRAVNPSRGIFEEMKYLELMIVNDHKTYKKHRSSHAHTNNFAKSVVNLVDSIYKEQLNTRVVLVAVETWTEKDQIDITTNPVQMLHEFSKYRQRIKQHADAVHLISRVTFHYKRSSLSYFGGVCSRTRGVGVNEYGLPMAVAQVLSQSLAQNLGIQWEPSSRKPKCDCTESWGGCIMEETGVSHSRKFSKCSILEYRDFLQRGGGACLFNRPTKLFEPTECGNGYVEAGEECDCGFHVECYGLCCKKCSLSNGAHCSDGPCCNNTSCLFQPRGYECRDAVNECDITEYCTGDSGQCPPNLHKQDGYACNQNQGRCYNGECKTRDNQCQYIWGTKAAGSDKFCYEKLNTEGTEKGNCGKDGDRWIQCSKHDVFCGFLLCTNLTRAPRIGQLQGEIIPTSFYHQGRVIDCSGAHVVLDDDTDVGYVEDGTPCGPSMMCLDRKCLQIQALNMSSCPLDSKGKVCSGHGVCSNEATCICDFTWAGTDCSIRDPVRNLHPPKDEGPKGPSATNLIIGSIAGAILVAAIVLGGTGWGFKNVKKRRFDPTQQGPI</sequence>
<dbReference type="EMBL" id="AB009672">
    <property type="protein sequence ID" value="BAA32351.1"/>
    <property type="molecule type" value="mRNA"/>
</dbReference>
<dbReference type="EMBL" id="AJ005580">
    <property type="protein sequence ID" value="CAC20565.1"/>
    <property type="molecule type" value="mRNA"/>
</dbReference>
<dbReference type="EMBL" id="CH471063">
    <property type="protein sequence ID" value="EAW70386.1"/>
    <property type="molecule type" value="Genomic_DNA"/>
</dbReference>
<dbReference type="EMBL" id="BC132763">
    <property type="protein sequence ID" value="AAI32764.1"/>
    <property type="molecule type" value="mRNA"/>
</dbReference>
<dbReference type="EMBL" id="BC132765">
    <property type="protein sequence ID" value="AAI32766.1"/>
    <property type="molecule type" value="mRNA"/>
</dbReference>
<dbReference type="CCDS" id="CCDS2369.1">
    <molecule id="O75077-1"/>
</dbReference>
<dbReference type="CCDS" id="CCDS92936.1">
    <molecule id="O75077-2"/>
</dbReference>
<dbReference type="RefSeq" id="NP_003803.1">
    <molecule id="O75077-1"/>
    <property type="nucleotide sequence ID" value="NM_003812.4"/>
</dbReference>
<dbReference type="RefSeq" id="XP_005246989.1">
    <molecule id="O75077-3"/>
    <property type="nucleotide sequence ID" value="XM_005246932.4"/>
</dbReference>
<dbReference type="RefSeq" id="XP_054200314.1">
    <molecule id="O75077-3"/>
    <property type="nucleotide sequence ID" value="XM_054344339.1"/>
</dbReference>
<dbReference type="SMR" id="O75077"/>
<dbReference type="BioGRID" id="114282">
    <property type="interactions" value="7"/>
</dbReference>
<dbReference type="CORUM" id="O75077"/>
<dbReference type="FunCoup" id="O75077">
    <property type="interactions" value="503"/>
</dbReference>
<dbReference type="IntAct" id="O75077">
    <property type="interactions" value="7"/>
</dbReference>
<dbReference type="MINT" id="O75077"/>
<dbReference type="STRING" id="9606.ENSP00000264377"/>
<dbReference type="MEROPS" id="M12.979"/>
<dbReference type="GlyCosmos" id="O75077">
    <property type="glycosylation" value="8 sites, No reported glycans"/>
</dbReference>
<dbReference type="GlyGen" id="O75077">
    <property type="glycosylation" value="9 sites, 3 N-linked glycans (4 sites), 2 O-linked glycans (1 site)"/>
</dbReference>
<dbReference type="iPTMnet" id="O75077"/>
<dbReference type="PhosphoSitePlus" id="O75077"/>
<dbReference type="SwissPalm" id="O75077"/>
<dbReference type="BioMuta" id="ADAM23"/>
<dbReference type="jPOST" id="O75077"/>
<dbReference type="MassIVE" id="O75077"/>
<dbReference type="PaxDb" id="9606-ENSP00000264377"/>
<dbReference type="PeptideAtlas" id="O75077"/>
<dbReference type="ProteomicsDB" id="49740">
    <molecule id="O75077-1"/>
</dbReference>
<dbReference type="ProteomicsDB" id="49741">
    <molecule id="O75077-2"/>
</dbReference>
<dbReference type="ProteomicsDB" id="49742">
    <molecule id="O75077-3"/>
</dbReference>
<dbReference type="Antibodypedia" id="34180">
    <property type="antibodies" value="232 antibodies from 29 providers"/>
</dbReference>
<dbReference type="DNASU" id="8745"/>
<dbReference type="Ensembl" id="ENST00000264377.8">
    <molecule id="O75077-1"/>
    <property type="protein sequence ID" value="ENSP00000264377.3"/>
    <property type="gene ID" value="ENSG00000114948.13"/>
</dbReference>
<dbReference type="GeneID" id="8745"/>
<dbReference type="KEGG" id="hsa:8745"/>
<dbReference type="MANE-Select" id="ENST00000264377.8">
    <property type="protein sequence ID" value="ENSP00000264377.3"/>
    <property type="RefSeq nucleotide sequence ID" value="NM_003812.4"/>
    <property type="RefSeq protein sequence ID" value="NP_003803.1"/>
</dbReference>
<dbReference type="UCSC" id="uc002vbq.6">
    <molecule id="O75077-1"/>
    <property type="organism name" value="human"/>
</dbReference>
<dbReference type="AGR" id="HGNC:202"/>
<dbReference type="CTD" id="8745"/>
<dbReference type="DisGeNET" id="8745"/>
<dbReference type="GeneCards" id="ADAM23"/>
<dbReference type="HGNC" id="HGNC:202">
    <property type="gene designation" value="ADAM23"/>
</dbReference>
<dbReference type="HPA" id="ENSG00000114948">
    <property type="expression patterns" value="Tissue enhanced (brain, parathyroid gland)"/>
</dbReference>
<dbReference type="MIM" id="603710">
    <property type="type" value="gene"/>
</dbReference>
<dbReference type="neXtProt" id="NX_O75077"/>
<dbReference type="OpenTargets" id="ENSG00000114948"/>
<dbReference type="PharmGKB" id="PA24519"/>
<dbReference type="VEuPathDB" id="HostDB:ENSG00000114948"/>
<dbReference type="eggNOG" id="KOG3607">
    <property type="taxonomic scope" value="Eukaryota"/>
</dbReference>
<dbReference type="GeneTree" id="ENSGT00940000158781"/>
<dbReference type="HOGENOM" id="CLU_012714_5_2_1"/>
<dbReference type="InParanoid" id="O75077"/>
<dbReference type="OMA" id="ECDCTES"/>
<dbReference type="OrthoDB" id="5951731at2759"/>
<dbReference type="PAN-GO" id="O75077">
    <property type="GO annotations" value="1 GO annotation based on evolutionary models"/>
</dbReference>
<dbReference type="PhylomeDB" id="O75077"/>
<dbReference type="TreeFam" id="TF314733"/>
<dbReference type="PathwayCommons" id="O75077"/>
<dbReference type="Reactome" id="R-HSA-5682910">
    <property type="pathway name" value="LGI-ADAM interactions"/>
</dbReference>
<dbReference type="SignaLink" id="O75077"/>
<dbReference type="BioGRID-ORCS" id="8745">
    <property type="hits" value="22 hits in 1149 CRISPR screens"/>
</dbReference>
<dbReference type="CD-CODE" id="FB4E32DD">
    <property type="entry name" value="Presynaptic clusters and postsynaptic densities"/>
</dbReference>
<dbReference type="ChiTaRS" id="ADAM23">
    <property type="organism name" value="human"/>
</dbReference>
<dbReference type="GeneWiki" id="ADAM23"/>
<dbReference type="GenomeRNAi" id="8745"/>
<dbReference type="Pharos" id="O75077">
    <property type="development level" value="Tbio"/>
</dbReference>
<dbReference type="PRO" id="PR:O75077"/>
<dbReference type="Proteomes" id="UP000005640">
    <property type="component" value="Chromosome 2"/>
</dbReference>
<dbReference type="RNAct" id="O75077">
    <property type="molecule type" value="protein"/>
</dbReference>
<dbReference type="Bgee" id="ENSG00000114948">
    <property type="expression patterns" value="Expressed in Brodmann (1909) area 10 and 161 other cell types or tissues"/>
</dbReference>
<dbReference type="ExpressionAtlas" id="O75077">
    <property type="expression patterns" value="baseline and differential"/>
</dbReference>
<dbReference type="GO" id="GO:0005576">
    <property type="term" value="C:extracellular region"/>
    <property type="evidence" value="ECO:0007669"/>
    <property type="project" value="UniProtKB-SubCell"/>
</dbReference>
<dbReference type="GO" id="GO:0098978">
    <property type="term" value="C:glutamatergic synapse"/>
    <property type="evidence" value="ECO:0007669"/>
    <property type="project" value="Ensembl"/>
</dbReference>
<dbReference type="GO" id="GO:0005886">
    <property type="term" value="C:plasma membrane"/>
    <property type="evidence" value="ECO:0000304"/>
    <property type="project" value="Reactome"/>
</dbReference>
<dbReference type="GO" id="GO:0042734">
    <property type="term" value="C:presynaptic membrane"/>
    <property type="evidence" value="ECO:0000318"/>
    <property type="project" value="GO_Central"/>
</dbReference>
<dbReference type="GO" id="GO:0005178">
    <property type="term" value="F:integrin binding"/>
    <property type="evidence" value="ECO:0000304"/>
    <property type="project" value="ProtInc"/>
</dbReference>
<dbReference type="GO" id="GO:0004222">
    <property type="term" value="F:metalloendopeptidase activity"/>
    <property type="evidence" value="ECO:0000318"/>
    <property type="project" value="GO_Central"/>
</dbReference>
<dbReference type="GO" id="GO:0008237">
    <property type="term" value="F:metallopeptidase activity"/>
    <property type="evidence" value="ECO:0000304"/>
    <property type="project" value="ProtInc"/>
</dbReference>
<dbReference type="GO" id="GO:0007155">
    <property type="term" value="P:cell adhesion"/>
    <property type="evidence" value="ECO:0007669"/>
    <property type="project" value="UniProtKB-KW"/>
</dbReference>
<dbReference type="GO" id="GO:1990830">
    <property type="term" value="P:cellular response to leukemia inhibitory factor"/>
    <property type="evidence" value="ECO:0007669"/>
    <property type="project" value="Ensembl"/>
</dbReference>
<dbReference type="GO" id="GO:0007417">
    <property type="term" value="P:central nervous system development"/>
    <property type="evidence" value="ECO:0000304"/>
    <property type="project" value="ProtInc"/>
</dbReference>
<dbReference type="GO" id="GO:0006508">
    <property type="term" value="P:proteolysis"/>
    <property type="evidence" value="ECO:0000318"/>
    <property type="project" value="GO_Central"/>
</dbReference>
<dbReference type="CDD" id="cd04269">
    <property type="entry name" value="ZnMc_adamalysin_II_like"/>
    <property type="match status" value="1"/>
</dbReference>
<dbReference type="FunFam" id="2.10.25.10:FF:000147">
    <property type="entry name" value="Disintegrin and metalloproteinase domain-containing protein 11"/>
    <property type="match status" value="1"/>
</dbReference>
<dbReference type="FunFam" id="3.40.390.10:FF:000014">
    <property type="entry name" value="disintegrin and metalloproteinase domain-containing protein 11"/>
    <property type="match status" value="1"/>
</dbReference>
<dbReference type="FunFam" id="4.10.70.10:FF:000001">
    <property type="entry name" value="Disintegrin and metalloproteinase domain-containing protein 22"/>
    <property type="match status" value="1"/>
</dbReference>
<dbReference type="Gene3D" id="3.40.390.10">
    <property type="entry name" value="Collagenase (Catalytic Domain)"/>
    <property type="match status" value="1"/>
</dbReference>
<dbReference type="Gene3D" id="4.10.70.10">
    <property type="entry name" value="Disintegrin domain"/>
    <property type="match status" value="1"/>
</dbReference>
<dbReference type="Gene3D" id="2.10.25.10">
    <property type="entry name" value="Laminin"/>
    <property type="match status" value="1"/>
</dbReference>
<dbReference type="InterPro" id="IPR006586">
    <property type="entry name" value="ADAM_Cys-rich"/>
</dbReference>
<dbReference type="InterPro" id="IPR001762">
    <property type="entry name" value="Disintegrin_dom"/>
</dbReference>
<dbReference type="InterPro" id="IPR036436">
    <property type="entry name" value="Disintegrin_dom_sf"/>
</dbReference>
<dbReference type="InterPro" id="IPR000742">
    <property type="entry name" value="EGF-like_dom"/>
</dbReference>
<dbReference type="InterPro" id="IPR013111">
    <property type="entry name" value="EGF_extracell"/>
</dbReference>
<dbReference type="InterPro" id="IPR024079">
    <property type="entry name" value="MetalloPept_cat_dom_sf"/>
</dbReference>
<dbReference type="InterPro" id="IPR001590">
    <property type="entry name" value="Peptidase_M12B"/>
</dbReference>
<dbReference type="InterPro" id="IPR002870">
    <property type="entry name" value="Peptidase_M12B_N"/>
</dbReference>
<dbReference type="InterPro" id="IPR034027">
    <property type="entry name" value="Reprolysin_adamalysin"/>
</dbReference>
<dbReference type="PANTHER" id="PTHR11905">
    <property type="entry name" value="ADAM A DISINTEGRIN AND METALLOPROTEASE DOMAIN"/>
    <property type="match status" value="1"/>
</dbReference>
<dbReference type="PANTHER" id="PTHR11905:SF13">
    <property type="entry name" value="DISINTEGRIN AND METALLOPROTEINASE DOMAIN-CONTAINING PROTEIN 23"/>
    <property type="match status" value="1"/>
</dbReference>
<dbReference type="Pfam" id="PF08516">
    <property type="entry name" value="ADAM_CR"/>
    <property type="match status" value="1"/>
</dbReference>
<dbReference type="Pfam" id="PF00200">
    <property type="entry name" value="Disintegrin"/>
    <property type="match status" value="1"/>
</dbReference>
<dbReference type="Pfam" id="PF07974">
    <property type="entry name" value="EGF_2"/>
    <property type="match status" value="1"/>
</dbReference>
<dbReference type="Pfam" id="PF01562">
    <property type="entry name" value="Pep_M12B_propep"/>
    <property type="match status" value="1"/>
</dbReference>
<dbReference type="Pfam" id="PF01421">
    <property type="entry name" value="Reprolysin"/>
    <property type="match status" value="1"/>
</dbReference>
<dbReference type="SMART" id="SM00608">
    <property type="entry name" value="ACR"/>
    <property type="match status" value="1"/>
</dbReference>
<dbReference type="SMART" id="SM00050">
    <property type="entry name" value="DISIN"/>
    <property type="match status" value="1"/>
</dbReference>
<dbReference type="SUPFAM" id="SSF57552">
    <property type="entry name" value="Blood coagulation inhibitor (disintegrin)"/>
    <property type="match status" value="1"/>
</dbReference>
<dbReference type="SUPFAM" id="SSF55486">
    <property type="entry name" value="Metalloproteases ('zincins'), catalytic domain"/>
    <property type="match status" value="1"/>
</dbReference>
<dbReference type="PROSITE" id="PS50215">
    <property type="entry name" value="ADAM_MEPRO"/>
    <property type="match status" value="1"/>
</dbReference>
<dbReference type="PROSITE" id="PS50214">
    <property type="entry name" value="DISINTEGRIN_2"/>
    <property type="match status" value="1"/>
</dbReference>
<dbReference type="PROSITE" id="PS00022">
    <property type="entry name" value="EGF_1"/>
    <property type="match status" value="1"/>
</dbReference>
<dbReference type="PROSITE" id="PS50026">
    <property type="entry name" value="EGF_3"/>
    <property type="match status" value="1"/>
</dbReference>
<protein>
    <recommendedName>
        <fullName>Disintegrin and metalloproteinase domain-containing protein 23</fullName>
        <shortName>ADAM 23</shortName>
    </recommendedName>
    <alternativeName>
        <fullName>Metalloproteinase-like, disintegrin-like, and cysteine-rich protein 3</fullName>
        <shortName>MDC-3</shortName>
    </alternativeName>
</protein>
<organism>
    <name type="scientific">Homo sapiens</name>
    <name type="common">Human</name>
    <dbReference type="NCBI Taxonomy" id="9606"/>
    <lineage>
        <taxon>Eukaryota</taxon>
        <taxon>Metazoa</taxon>
        <taxon>Chordata</taxon>
        <taxon>Craniata</taxon>
        <taxon>Vertebrata</taxon>
        <taxon>Euteleostomi</taxon>
        <taxon>Mammalia</taxon>
        <taxon>Eutheria</taxon>
        <taxon>Euarchontoglires</taxon>
        <taxon>Primates</taxon>
        <taxon>Haplorrhini</taxon>
        <taxon>Catarrhini</taxon>
        <taxon>Hominidae</taxon>
        <taxon>Homo</taxon>
    </lineage>
</organism>
<gene>
    <name type="primary">ADAM23</name>
    <name type="synonym">MDC3</name>
</gene>
<proteinExistence type="evidence at protein level"/>
<keyword id="KW-0025">Alternative splicing</keyword>
<keyword id="KW-0130">Cell adhesion</keyword>
<keyword id="KW-1003">Cell membrane</keyword>
<keyword id="KW-0165">Cleavage on pair of basic residues</keyword>
<keyword id="KW-1015">Disulfide bond</keyword>
<keyword id="KW-0245">EGF-like domain</keyword>
<keyword id="KW-0325">Glycoprotein</keyword>
<keyword id="KW-0472">Membrane</keyword>
<keyword id="KW-1267">Proteomics identification</keyword>
<keyword id="KW-1185">Reference proteome</keyword>
<keyword id="KW-0964">Secreted</keyword>
<keyword id="KW-0732">Signal</keyword>
<keyword id="KW-0812">Transmembrane</keyword>
<keyword id="KW-1133">Transmembrane helix</keyword>
<evidence type="ECO:0000250" key="1"/>
<evidence type="ECO:0000255" key="2"/>
<evidence type="ECO:0000255" key="3">
    <source>
        <dbReference type="PROSITE-ProRule" id="PRU00068"/>
    </source>
</evidence>
<evidence type="ECO:0000255" key="4">
    <source>
        <dbReference type="PROSITE-ProRule" id="PRU00076"/>
    </source>
</evidence>
<evidence type="ECO:0000255" key="5">
    <source>
        <dbReference type="PROSITE-ProRule" id="PRU00276"/>
    </source>
</evidence>
<evidence type="ECO:0000256" key="6">
    <source>
        <dbReference type="SAM" id="MobiDB-lite"/>
    </source>
</evidence>
<evidence type="ECO:0000269" key="7">
    <source>
    </source>
</evidence>
<evidence type="ECO:0000269" key="8">
    <source>
    </source>
</evidence>
<evidence type="ECO:0000303" key="9">
    <source>
    </source>
</evidence>
<evidence type="ECO:0000305" key="10"/>
<comment type="function">
    <text>May play a role in cell-cell and cell-matrix interactions. This is a non-catalytic metalloprotease-like protein.</text>
</comment>
<comment type="subunit">
    <text evidence="1">Can bind to LGI1 and LGI4 (By similarity). Ligand for integrin alpha-V/beta-3.</text>
</comment>
<comment type="subcellular location">
    <subcellularLocation>
        <location evidence="10">Cell membrane</location>
        <topology evidence="10">Single-pass type I membrane protein</topology>
    </subcellularLocation>
</comment>
<comment type="subcellular location">
    <molecule>Isoform Gamma</molecule>
    <subcellularLocation>
        <location>Secreted</location>
    </subcellularLocation>
</comment>
<comment type="alternative products">
    <event type="alternative splicing"/>
    <isoform>
        <id>O75077-1</id>
        <name>Alpha</name>
        <sequence type="displayed"/>
    </isoform>
    <isoform>
        <id>O75077-2</id>
        <name>Beta</name>
        <sequence type="described" ref="VSP_012046"/>
    </isoform>
    <isoform>
        <id>O75077-3</id>
        <name>Gamma</name>
        <sequence type="described" ref="VSP_012045"/>
    </isoform>
</comment>
<comment type="tissue specificity">
    <text evidence="8">Highly expressed in the brain and weakly expressed in the heart. In the brain, expressed prominently in the amygdala, caudate nucleus, hypothalamus, thalamus, cerebral cortex and occipital pole.</text>
</comment>
<comment type="developmental stage">
    <text>Highly expressed in the fetal brain.</text>
</comment>
<comment type="domain">
    <text>A conserved motif AVN[ED]CD within the disintegrin-like domain could be involved in the binding to the integrin receptor.</text>
</comment>
<comment type="online information" name="Atlas of Genetics and Cytogenetics in Oncology and Haematology">
    <link uri="https://atlasgeneticsoncology.org/gene/44041/ADAM23"/>
</comment>
<feature type="signal peptide" evidence="2">
    <location>
        <begin position="1"/>
        <end position="59"/>
    </location>
</feature>
<feature type="propeptide" id="PRO_0000029118" evidence="2">
    <location>
        <begin position="60"/>
        <end position="286"/>
    </location>
</feature>
<feature type="chain" id="PRO_0000029119" description="Disintegrin and metalloproteinase domain-containing protein 23">
    <location>
        <begin position="287"/>
        <end position="832"/>
    </location>
</feature>
<feature type="topological domain" description="Extracellular" evidence="2">
    <location>
        <begin position="287"/>
        <end position="792"/>
    </location>
</feature>
<feature type="transmembrane region" description="Helical" evidence="2">
    <location>
        <begin position="793"/>
        <end position="813"/>
    </location>
</feature>
<feature type="topological domain" description="Cytoplasmic" evidence="2">
    <location>
        <begin position="814"/>
        <end position="832"/>
    </location>
</feature>
<feature type="domain" description="Peptidase M12B" evidence="5">
    <location>
        <begin position="299"/>
        <end position="496"/>
    </location>
</feature>
<feature type="domain" description="Disintegrin" evidence="3">
    <location>
        <begin position="502"/>
        <end position="588"/>
    </location>
</feature>
<feature type="domain" description="EGF-like" evidence="4">
    <location>
        <begin position="732"/>
        <end position="769"/>
    </location>
</feature>
<feature type="region of interest" description="Disordered" evidence="6">
    <location>
        <begin position="1"/>
        <end position="37"/>
    </location>
</feature>
<feature type="region of interest" description="May bind the integrin receptor">
    <location>
        <begin position="563"/>
        <end position="568"/>
    </location>
</feature>
<feature type="compositionally biased region" description="Polar residues" evidence="6">
    <location>
        <begin position="1"/>
        <end position="10"/>
    </location>
</feature>
<feature type="compositionally biased region" description="Low complexity" evidence="6">
    <location>
        <begin position="28"/>
        <end position="37"/>
    </location>
</feature>
<feature type="glycosylation site" description="N-linked (GlcNAc...) asparagine" evidence="2">
    <location>
        <position position="76"/>
    </location>
</feature>
<feature type="glycosylation site" description="N-linked (GlcNAc...) asparagine" evidence="2">
    <location>
        <position position="96"/>
    </location>
</feature>
<feature type="glycosylation site" description="N-linked (GlcNAc...) asparagine" evidence="2">
    <location>
        <position position="100"/>
    </location>
</feature>
<feature type="glycosylation site" description="N-linked (GlcNAc...) asparagine" evidence="2">
    <location>
        <position position="263"/>
    </location>
</feature>
<feature type="glycosylation site" description="N-linked (GlcNAc...) asparagine" evidence="2">
    <location>
        <position position="547"/>
    </location>
</feature>
<feature type="glycosylation site" description="N-linked (GlcNAc...) asparagine" evidence="2">
    <location>
        <position position="548"/>
    </location>
</feature>
<feature type="glycosylation site" description="N-linked (GlcNAc...) asparagine" evidence="2">
    <location>
        <position position="664"/>
    </location>
</feature>
<feature type="glycosylation site" description="N-linked (GlcNAc...) asparagine" evidence="2">
    <location>
        <position position="732"/>
    </location>
</feature>
<feature type="disulfide bond" evidence="1">
    <location>
        <begin position="408"/>
        <end position="491"/>
    </location>
</feature>
<feature type="disulfide bond" evidence="1">
    <location>
        <begin position="450"/>
        <end position="475"/>
    </location>
</feature>
<feature type="disulfide bond" evidence="1">
    <location>
        <begin position="452"/>
        <end position="459"/>
    </location>
</feature>
<feature type="disulfide bond" evidence="1">
    <location>
        <begin position="560"/>
        <end position="580"/>
    </location>
</feature>
<feature type="disulfide bond" evidence="1">
    <location>
        <begin position="736"/>
        <end position="751"/>
    </location>
</feature>
<feature type="disulfide bond" evidence="1">
    <location>
        <begin position="745"/>
        <end position="757"/>
    </location>
</feature>
<feature type="disulfide bond" evidence="1">
    <location>
        <begin position="759"/>
        <end position="768"/>
    </location>
</feature>
<feature type="splice variant" id="VSP_012045" description="In isoform Gamma." evidence="9">
    <original>GPSATNLIIGSIAGAILVAAIVLGGTGWGFKNVKKRRFDPTQQGPI</original>
    <variation>EMSRREGSILLSKAPSESAALDGHRLALLDSGYDILAAVLLELLSL</variation>
    <location>
        <begin position="787"/>
        <end position="832"/>
    </location>
</feature>
<feature type="splice variant" id="VSP_012046" description="In isoform Beta." evidence="9">
    <original>GPSATNLIIGSIAGAILVAAIVLGGTGWGFK</original>
    <variation>VNMATSRLIGAVAGTLLALGVIFGGTGWGIE</variation>
    <location>
        <begin position="787"/>
        <end position="817"/>
    </location>
</feature>
<feature type="mutagenesis site" description="Significantly lower of adhesion-promoting activity." evidence="7">
    <original>E</original>
    <variation>A</variation>
    <location>
        <position position="566"/>
    </location>
</feature>
<reference key="1">
    <citation type="journal article" date="1998" name="Biochem. J.">
        <title>Metalloproteinase-like, disintegrin-like, cysteine-rich proteins MDC2 and MDC3: novel human cellular disintegrins highly expressed in the brain.</title>
        <authorList>
            <person name="Sagane K."/>
            <person name="Ohya Y."/>
            <person name="Hasegawa Y."/>
            <person name="Tanaka I."/>
        </authorList>
    </citation>
    <scope>NUCLEOTIDE SEQUENCE [MRNA] (ISOFORM ALPHA)</scope>
    <source>
        <tissue>Brain</tissue>
    </source>
</reference>
<reference key="2">
    <citation type="journal article" date="2000" name="Mol. Biol. Cell">
        <title>ADAM 23/MDC3, a human disintegrin that promotes cell adhesion via interaction with the alpha v beta 3 integrin through an RGD-independent mechanism.</title>
        <authorList>
            <person name="Cal S."/>
            <person name="Freije J.M.P."/>
            <person name="Lopez J.M."/>
            <person name="Takada Y."/>
            <person name="Lopez-Otin C."/>
        </authorList>
    </citation>
    <scope>NUCLEOTIDE SEQUENCE [MRNA] (ISOFORM ALPHA)</scope>
    <scope>INTERACTION WITH INTEGRIN ALPHA-V/BETA-3</scope>
    <scope>MUTAGENESIS OF GLU-566</scope>
    <source>
        <tissue>Brain</tissue>
    </source>
</reference>
<reference key="3">
    <citation type="journal article" date="2004" name="Gene">
        <title>Two novel isoforms of Adam23 expressed in the developmental process of mouse and human brains.</title>
        <authorList>
            <person name="Sun Y.P."/>
            <person name="Deng K.J."/>
            <person name="Wang F."/>
            <person name="Zhang J."/>
            <person name="Huang X."/>
            <person name="Qiao S."/>
            <person name="Zhao S."/>
        </authorList>
    </citation>
    <scope>NUCLEOTIDE SEQUENCE [MRNA] (ISOFORMS ALPHA; BETA AND GAMMA)</scope>
    <scope>TISSUE SPECIFICITY</scope>
    <source>
        <tissue>Fetal brain</tissue>
    </source>
</reference>
<reference key="4">
    <citation type="submission" date="2005-07" db="EMBL/GenBank/DDBJ databases">
        <authorList>
            <person name="Mural R.J."/>
            <person name="Istrail S."/>
            <person name="Sutton G.G."/>
            <person name="Florea L."/>
            <person name="Halpern A.L."/>
            <person name="Mobarry C.M."/>
            <person name="Lippert R."/>
            <person name="Walenz B."/>
            <person name="Shatkay H."/>
            <person name="Dew I."/>
            <person name="Miller J.R."/>
            <person name="Flanigan M.J."/>
            <person name="Edwards N.J."/>
            <person name="Bolanos R."/>
            <person name="Fasulo D."/>
            <person name="Halldorsson B.V."/>
            <person name="Hannenhalli S."/>
            <person name="Turner R."/>
            <person name="Yooseph S."/>
            <person name="Lu F."/>
            <person name="Nusskern D.R."/>
            <person name="Shue B.C."/>
            <person name="Zheng X.H."/>
            <person name="Zhong F."/>
            <person name="Delcher A.L."/>
            <person name="Huson D.H."/>
            <person name="Kravitz S.A."/>
            <person name="Mouchard L."/>
            <person name="Reinert K."/>
            <person name="Remington K.A."/>
            <person name="Clark A.G."/>
            <person name="Waterman M.S."/>
            <person name="Eichler E.E."/>
            <person name="Adams M.D."/>
            <person name="Hunkapiller M.W."/>
            <person name="Myers E.W."/>
            <person name="Venter J.C."/>
        </authorList>
    </citation>
    <scope>NUCLEOTIDE SEQUENCE [LARGE SCALE GENOMIC DNA]</scope>
</reference>
<reference key="5">
    <citation type="journal article" date="2004" name="Genome Res.">
        <title>The status, quality, and expansion of the NIH full-length cDNA project: the Mammalian Gene Collection (MGC).</title>
        <authorList>
            <consortium name="The MGC Project Team"/>
        </authorList>
    </citation>
    <scope>NUCLEOTIDE SEQUENCE [LARGE SCALE MRNA] (ISOFORM ALPHA)</scope>
    <source>
        <tissue>Brain</tissue>
    </source>
</reference>